<dbReference type="EMBL" id="AK026935">
    <property type="protein sequence ID" value="BAB15594.1"/>
    <property type="status" value="ALT_FRAME"/>
    <property type="molecule type" value="mRNA"/>
</dbReference>
<dbReference type="EMBL" id="BC058900">
    <property type="protein sequence ID" value="AAH58900.1"/>
    <property type="molecule type" value="mRNA"/>
</dbReference>
<dbReference type="CCDS" id="CCDS42140.1">
    <molecule id="Q9H5N1-1"/>
</dbReference>
<dbReference type="RefSeq" id="NP_079092.2">
    <molecule id="Q9H5N1-1"/>
    <property type="nucleotide sequence ID" value="NM_024816.3"/>
</dbReference>
<dbReference type="SMR" id="Q9H5N1"/>
<dbReference type="BioGRID" id="122962">
    <property type="interactions" value="104"/>
</dbReference>
<dbReference type="FunCoup" id="Q9H5N1">
    <property type="interactions" value="712"/>
</dbReference>
<dbReference type="IntAct" id="Q9H5N1">
    <property type="interactions" value="67"/>
</dbReference>
<dbReference type="MINT" id="Q9H5N1"/>
<dbReference type="STRING" id="9606.ENSP00000350934"/>
<dbReference type="GlyGen" id="Q9H5N1">
    <property type="glycosylation" value="1 site, 1 O-linked glycan (1 site)"/>
</dbReference>
<dbReference type="iPTMnet" id="Q9H5N1"/>
<dbReference type="PhosphoSitePlus" id="Q9H5N1"/>
<dbReference type="BioMuta" id="RABEP2"/>
<dbReference type="DMDM" id="47606049"/>
<dbReference type="jPOST" id="Q9H5N1"/>
<dbReference type="MassIVE" id="Q9H5N1"/>
<dbReference type="PaxDb" id="9606-ENSP00000350934"/>
<dbReference type="PeptideAtlas" id="Q9H5N1"/>
<dbReference type="ProteomicsDB" id="80920">
    <molecule id="Q9H5N1-1"/>
</dbReference>
<dbReference type="ProteomicsDB" id="80921">
    <molecule id="Q9H5N1-2"/>
</dbReference>
<dbReference type="Pumba" id="Q9H5N1"/>
<dbReference type="Antibodypedia" id="26625">
    <property type="antibodies" value="124 antibodies from 26 providers"/>
</dbReference>
<dbReference type="DNASU" id="79874"/>
<dbReference type="Ensembl" id="ENST00000357573.10">
    <molecule id="Q9H5N1-2"/>
    <property type="protein sequence ID" value="ENSP00000350186.6"/>
    <property type="gene ID" value="ENSG00000177548.13"/>
</dbReference>
<dbReference type="Ensembl" id="ENST00000358201.9">
    <molecule id="Q9H5N1-1"/>
    <property type="protein sequence ID" value="ENSP00000350934.4"/>
    <property type="gene ID" value="ENSG00000177548.13"/>
</dbReference>
<dbReference type="GeneID" id="79874"/>
<dbReference type="KEGG" id="hsa:79874"/>
<dbReference type="MANE-Select" id="ENST00000358201.9">
    <property type="protein sequence ID" value="ENSP00000350934.4"/>
    <property type="RefSeq nucleotide sequence ID" value="NM_024816.3"/>
    <property type="RefSeq protein sequence ID" value="NP_079092.2"/>
</dbReference>
<dbReference type="UCSC" id="uc002drq.4">
    <molecule id="Q9H5N1-1"/>
    <property type="organism name" value="human"/>
</dbReference>
<dbReference type="AGR" id="HGNC:24817"/>
<dbReference type="CTD" id="79874"/>
<dbReference type="DisGeNET" id="79874"/>
<dbReference type="GeneCards" id="RABEP2"/>
<dbReference type="HGNC" id="HGNC:24817">
    <property type="gene designation" value="RABEP2"/>
</dbReference>
<dbReference type="HPA" id="ENSG00000177548">
    <property type="expression patterns" value="Low tissue specificity"/>
</dbReference>
<dbReference type="MIM" id="611869">
    <property type="type" value="gene"/>
</dbReference>
<dbReference type="neXtProt" id="NX_Q9H5N1"/>
<dbReference type="OpenTargets" id="ENSG00000177548"/>
<dbReference type="PharmGKB" id="PA134952719"/>
<dbReference type="VEuPathDB" id="HostDB:ENSG00000177548"/>
<dbReference type="eggNOG" id="KOG0993">
    <property type="taxonomic scope" value="Eukaryota"/>
</dbReference>
<dbReference type="GeneTree" id="ENSGT00530000063743"/>
<dbReference type="HOGENOM" id="CLU_035043_0_0_1"/>
<dbReference type="InParanoid" id="Q9H5N1"/>
<dbReference type="OMA" id="EMMHSIV"/>
<dbReference type="OrthoDB" id="79940at2759"/>
<dbReference type="PAN-GO" id="Q9H5N1">
    <property type="GO annotations" value="1 GO annotation based on evolutionary models"/>
</dbReference>
<dbReference type="PhylomeDB" id="Q9H5N1"/>
<dbReference type="TreeFam" id="TF329365"/>
<dbReference type="PathwayCommons" id="Q9H5N1"/>
<dbReference type="SignaLink" id="Q9H5N1"/>
<dbReference type="SIGNOR" id="Q9H5N1"/>
<dbReference type="BioGRID-ORCS" id="79874">
    <property type="hits" value="14 hits in 1151 CRISPR screens"/>
</dbReference>
<dbReference type="ChiTaRS" id="RABEP2">
    <property type="organism name" value="human"/>
</dbReference>
<dbReference type="GenomeRNAi" id="79874"/>
<dbReference type="Pharos" id="Q9H5N1">
    <property type="development level" value="Tbio"/>
</dbReference>
<dbReference type="PRO" id="PR:Q9H5N1"/>
<dbReference type="Proteomes" id="UP000005640">
    <property type="component" value="Chromosome 16"/>
</dbReference>
<dbReference type="RNAct" id="Q9H5N1">
    <property type="molecule type" value="protein"/>
</dbReference>
<dbReference type="Bgee" id="ENSG00000177548">
    <property type="expression patterns" value="Expressed in pancreatic ductal cell and 183 other cell types or tissues"/>
</dbReference>
<dbReference type="ExpressionAtlas" id="Q9H5N1">
    <property type="expression patterns" value="baseline and differential"/>
</dbReference>
<dbReference type="GO" id="GO:0005813">
    <property type="term" value="C:centrosome"/>
    <property type="evidence" value="ECO:0000314"/>
    <property type="project" value="UniProtKB"/>
</dbReference>
<dbReference type="GO" id="GO:0036064">
    <property type="term" value="C:ciliary basal body"/>
    <property type="evidence" value="ECO:0000314"/>
    <property type="project" value="UniProtKB"/>
</dbReference>
<dbReference type="GO" id="GO:0005829">
    <property type="term" value="C:cytosol"/>
    <property type="evidence" value="ECO:0000314"/>
    <property type="project" value="HPA"/>
</dbReference>
<dbReference type="GO" id="GO:0005769">
    <property type="term" value="C:early endosome"/>
    <property type="evidence" value="ECO:0007669"/>
    <property type="project" value="UniProtKB-SubCell"/>
</dbReference>
<dbReference type="GO" id="GO:0005794">
    <property type="term" value="C:Golgi apparatus"/>
    <property type="evidence" value="ECO:0000314"/>
    <property type="project" value="HPA"/>
</dbReference>
<dbReference type="GO" id="GO:0043231">
    <property type="term" value="C:intracellular membrane-bounded organelle"/>
    <property type="evidence" value="ECO:0000314"/>
    <property type="project" value="HPA"/>
</dbReference>
<dbReference type="GO" id="GO:0008083">
    <property type="term" value="F:growth factor activity"/>
    <property type="evidence" value="ECO:0007669"/>
    <property type="project" value="InterPro"/>
</dbReference>
<dbReference type="GO" id="GO:0005096">
    <property type="term" value="F:GTPase activator activity"/>
    <property type="evidence" value="ECO:0007669"/>
    <property type="project" value="InterPro"/>
</dbReference>
<dbReference type="GO" id="GO:0030030">
    <property type="term" value="P:cell projection organization"/>
    <property type="evidence" value="ECO:0007669"/>
    <property type="project" value="UniProtKB-KW"/>
</dbReference>
<dbReference type="GO" id="GO:0006897">
    <property type="term" value="P:endocytosis"/>
    <property type="evidence" value="ECO:0007669"/>
    <property type="project" value="UniProtKB-KW"/>
</dbReference>
<dbReference type="GO" id="GO:0015031">
    <property type="term" value="P:protein transport"/>
    <property type="evidence" value="ECO:0007669"/>
    <property type="project" value="UniProtKB-KW"/>
</dbReference>
<dbReference type="GO" id="GO:1902017">
    <property type="term" value="P:regulation of cilium assembly"/>
    <property type="evidence" value="ECO:0000315"/>
    <property type="project" value="UniProtKB"/>
</dbReference>
<dbReference type="FunFam" id="1.20.5.340:FF:000028">
    <property type="entry name" value="rab GTPase-binding effector protein 2 isoform X1"/>
    <property type="match status" value="1"/>
</dbReference>
<dbReference type="FunFam" id="1.20.5.730:FF:000003">
    <property type="entry name" value="rab GTPase-binding effector protein 2 isoform X1"/>
    <property type="match status" value="1"/>
</dbReference>
<dbReference type="Gene3D" id="1.20.5.340">
    <property type="match status" value="1"/>
</dbReference>
<dbReference type="Gene3D" id="1.20.5.730">
    <property type="entry name" value="Single helix bin"/>
    <property type="match status" value="1"/>
</dbReference>
<dbReference type="InterPro" id="IPR003914">
    <property type="entry name" value="Rabaptin"/>
</dbReference>
<dbReference type="InterPro" id="IPR018514">
    <property type="entry name" value="Rabaptin_coiled-coil"/>
</dbReference>
<dbReference type="InterPro" id="IPR015390">
    <property type="entry name" value="Rabaptin_Rab5-bd_dom"/>
</dbReference>
<dbReference type="PANTHER" id="PTHR31179">
    <property type="entry name" value="RAB GTPASE-BINDING EFFECTOR PROTEIN"/>
    <property type="match status" value="1"/>
</dbReference>
<dbReference type="PANTHER" id="PTHR31179:SF6">
    <property type="entry name" value="RAB GTPASE-BINDING EFFECTOR PROTEIN 2"/>
    <property type="match status" value="1"/>
</dbReference>
<dbReference type="Pfam" id="PF09311">
    <property type="entry name" value="Rab5-bind"/>
    <property type="match status" value="2"/>
</dbReference>
<dbReference type="Pfam" id="PF03528">
    <property type="entry name" value="Rabaptin"/>
    <property type="match status" value="1"/>
</dbReference>
<dbReference type="PRINTS" id="PR01432">
    <property type="entry name" value="RABAPTIN"/>
</dbReference>
<dbReference type="SUPFAM" id="SSF103652">
    <property type="entry name" value="G protein-binding domain"/>
    <property type="match status" value="2"/>
</dbReference>
<sequence length="569" mass="63543">MAAAAPVAADDDERRRRPGAALEDSRSQEGANGEAESGELSRLRAELAGALAEMETMKAVAEVSESTKAEAVAAVQRQCQEEVASLQAILKDSISSYEAQITALKQERQQQQQDCEEKERELGRLKQLLSRAYPLDSLEKQMEKAHEDSEKLREIVLPMEKEIEELKAKLLRAEELIQEIQRRPRHAPSLHGSTELLPLSRDPSPPLEPLEELSGDGGPAAEAFAHNCDDSASISSFSLGGGVGSSSSLPQSRQGLSPEQEETASLVSTGTLVPEGIYLPPPGYQLVPDTQWEQLQTEGRQLQKDLESVSRERDELQEGLRRSNEDCAKQMQVLLAQVQNSEQLLRTLQGTVSQAQERVQLQMAELVTTHKCLHHEVKRLNEENQGLRAEQLPSSAPQGSQQEQGEEESLPSSVPELQQLLCCTRQEARARLQAQEHGAERLRIEIVTLREALEEETVARASLEGQLRVQREETEVLEASLCSLRTEMERVQQEQSKAQLPDLLSEQRAKVLRLQAELETSEQVQRDFVRLSQALQVRLERIRQAETLEQVRSIMDEAPLTDVRDIKDT</sequence>
<name>RABE2_HUMAN</name>
<proteinExistence type="evidence at protein level"/>
<reference key="1">
    <citation type="journal article" date="2004" name="Nat. Genet.">
        <title>Complete sequencing and characterization of 21,243 full-length human cDNAs.</title>
        <authorList>
            <person name="Ota T."/>
            <person name="Suzuki Y."/>
            <person name="Nishikawa T."/>
            <person name="Otsuki T."/>
            <person name="Sugiyama T."/>
            <person name="Irie R."/>
            <person name="Wakamatsu A."/>
            <person name="Hayashi K."/>
            <person name="Sato H."/>
            <person name="Nagai K."/>
            <person name="Kimura K."/>
            <person name="Makita H."/>
            <person name="Sekine M."/>
            <person name="Obayashi M."/>
            <person name="Nishi T."/>
            <person name="Shibahara T."/>
            <person name="Tanaka T."/>
            <person name="Ishii S."/>
            <person name="Yamamoto J."/>
            <person name="Saito K."/>
            <person name="Kawai Y."/>
            <person name="Isono Y."/>
            <person name="Nakamura Y."/>
            <person name="Nagahari K."/>
            <person name="Murakami K."/>
            <person name="Yasuda T."/>
            <person name="Iwayanagi T."/>
            <person name="Wagatsuma M."/>
            <person name="Shiratori A."/>
            <person name="Sudo H."/>
            <person name="Hosoiri T."/>
            <person name="Kaku Y."/>
            <person name="Kodaira H."/>
            <person name="Kondo H."/>
            <person name="Sugawara M."/>
            <person name="Takahashi M."/>
            <person name="Kanda K."/>
            <person name="Yokoi T."/>
            <person name="Furuya T."/>
            <person name="Kikkawa E."/>
            <person name="Omura Y."/>
            <person name="Abe K."/>
            <person name="Kamihara K."/>
            <person name="Katsuta N."/>
            <person name="Sato K."/>
            <person name="Tanikawa M."/>
            <person name="Yamazaki M."/>
            <person name="Ninomiya K."/>
            <person name="Ishibashi T."/>
            <person name="Yamashita H."/>
            <person name="Murakawa K."/>
            <person name="Fujimori K."/>
            <person name="Tanai H."/>
            <person name="Kimata M."/>
            <person name="Watanabe M."/>
            <person name="Hiraoka S."/>
            <person name="Chiba Y."/>
            <person name="Ishida S."/>
            <person name="Ono Y."/>
            <person name="Takiguchi S."/>
            <person name="Watanabe S."/>
            <person name="Yosida M."/>
            <person name="Hotuta T."/>
            <person name="Kusano J."/>
            <person name="Kanehori K."/>
            <person name="Takahashi-Fujii A."/>
            <person name="Hara H."/>
            <person name="Tanase T.-O."/>
            <person name="Nomura Y."/>
            <person name="Togiya S."/>
            <person name="Komai F."/>
            <person name="Hara R."/>
            <person name="Takeuchi K."/>
            <person name="Arita M."/>
            <person name="Imose N."/>
            <person name="Musashino K."/>
            <person name="Yuuki H."/>
            <person name="Oshima A."/>
            <person name="Sasaki N."/>
            <person name="Aotsuka S."/>
            <person name="Yoshikawa Y."/>
            <person name="Matsunawa H."/>
            <person name="Ichihara T."/>
            <person name="Shiohata N."/>
            <person name="Sano S."/>
            <person name="Moriya S."/>
            <person name="Momiyama H."/>
            <person name="Satoh N."/>
            <person name="Takami S."/>
            <person name="Terashima Y."/>
            <person name="Suzuki O."/>
            <person name="Nakagawa S."/>
            <person name="Senoh A."/>
            <person name="Mizoguchi H."/>
            <person name="Goto Y."/>
            <person name="Shimizu F."/>
            <person name="Wakebe H."/>
            <person name="Hishigaki H."/>
            <person name="Watanabe T."/>
            <person name="Sugiyama A."/>
            <person name="Takemoto M."/>
            <person name="Kawakami B."/>
            <person name="Yamazaki M."/>
            <person name="Watanabe K."/>
            <person name="Kumagai A."/>
            <person name="Itakura S."/>
            <person name="Fukuzumi Y."/>
            <person name="Fujimori Y."/>
            <person name="Komiyama M."/>
            <person name="Tashiro H."/>
            <person name="Tanigami A."/>
            <person name="Fujiwara T."/>
            <person name="Ono T."/>
            <person name="Yamada K."/>
            <person name="Fujii Y."/>
            <person name="Ozaki K."/>
            <person name="Hirao M."/>
            <person name="Ohmori Y."/>
            <person name="Kawabata A."/>
            <person name="Hikiji T."/>
            <person name="Kobatake N."/>
            <person name="Inagaki H."/>
            <person name="Ikema Y."/>
            <person name="Okamoto S."/>
            <person name="Okitani R."/>
            <person name="Kawakami T."/>
            <person name="Noguchi S."/>
            <person name="Itoh T."/>
            <person name="Shigeta K."/>
            <person name="Senba T."/>
            <person name="Matsumura K."/>
            <person name="Nakajima Y."/>
            <person name="Mizuno T."/>
            <person name="Morinaga M."/>
            <person name="Sasaki M."/>
            <person name="Togashi T."/>
            <person name="Oyama M."/>
            <person name="Hata H."/>
            <person name="Watanabe M."/>
            <person name="Komatsu T."/>
            <person name="Mizushima-Sugano J."/>
            <person name="Satoh T."/>
            <person name="Shirai Y."/>
            <person name="Takahashi Y."/>
            <person name="Nakagawa K."/>
            <person name="Okumura K."/>
            <person name="Nagase T."/>
            <person name="Nomura N."/>
            <person name="Kikuchi H."/>
            <person name="Masuho Y."/>
            <person name="Yamashita R."/>
            <person name="Nakai K."/>
            <person name="Yada T."/>
            <person name="Nakamura Y."/>
            <person name="Ohara O."/>
            <person name="Isogai T."/>
            <person name="Sugano S."/>
        </authorList>
    </citation>
    <scope>NUCLEOTIDE SEQUENCE [LARGE SCALE MRNA] (ISOFORM 1)</scope>
    <source>
        <tissue>Hepatoma</tissue>
    </source>
</reference>
<reference key="2">
    <citation type="journal article" date="2004" name="Genome Res.">
        <title>The status, quality, and expansion of the NIH full-length cDNA project: the Mammalian Gene Collection (MGC).</title>
        <authorList>
            <consortium name="The MGC Project Team"/>
        </authorList>
    </citation>
    <scope>NUCLEOTIDE SEQUENCE [LARGE SCALE MRNA] (ISOFORM 2)</scope>
    <source>
        <tissue>Mammary gland</tissue>
    </source>
</reference>
<reference key="3">
    <citation type="journal article" date="1998" name="EMBO J.">
        <title>Two distinct effectors of the small GTPase Rab5 cooperate in endocytic membrane fusion.</title>
        <authorList>
            <person name="Gournier H."/>
            <person name="Stenmark H."/>
            <person name="Rybin V."/>
            <person name="Lippe R."/>
            <person name="Zerial M."/>
        </authorList>
    </citation>
    <scope>FUNCTION</scope>
    <scope>SUBCELLULAR LOCATION</scope>
    <scope>INTERACTION WITH RABGEF1</scope>
</reference>
<reference key="4">
    <citation type="journal article" date="2011" name="BMC Syst. Biol.">
        <title>Initial characterization of the human central proteome.</title>
        <authorList>
            <person name="Burkard T.R."/>
            <person name="Planyavsky M."/>
            <person name="Kaupe I."/>
            <person name="Breitwieser F.P."/>
            <person name="Buerckstuemmer T."/>
            <person name="Bennett K.L."/>
            <person name="Superti-Furga G."/>
            <person name="Colinge J."/>
        </authorList>
    </citation>
    <scope>IDENTIFICATION BY MASS SPECTROMETRY [LARGE SCALE ANALYSIS]</scope>
</reference>
<reference key="5">
    <citation type="journal article" date="2012" name="Proc. Natl. Acad. Sci. U.S.A.">
        <title>N-terminal acetylome analyses and functional insights of the N-terminal acetyltransferase NatB.</title>
        <authorList>
            <person name="Van Damme P."/>
            <person name="Lasa M."/>
            <person name="Polevoda B."/>
            <person name="Gazquez C."/>
            <person name="Elosegui-Artola A."/>
            <person name="Kim D.S."/>
            <person name="De Juan-Pardo E."/>
            <person name="Demeyer K."/>
            <person name="Hole K."/>
            <person name="Larrea E."/>
            <person name="Timmerman E."/>
            <person name="Prieto J."/>
            <person name="Arnesen T."/>
            <person name="Sherman F."/>
            <person name="Gevaert K."/>
            <person name="Aldabe R."/>
        </authorList>
    </citation>
    <scope>ACETYLATION [LARGE SCALE ANALYSIS] AT ALA-2</scope>
    <scope>CLEAVAGE OF INITIATOR METHIONINE [LARGE SCALE ANALYSIS]</scope>
    <scope>IDENTIFICATION BY MASS SPECTROMETRY [LARGE SCALE ANALYSIS]</scope>
</reference>
<reference key="6">
    <citation type="journal article" date="2013" name="J. Proteome Res.">
        <title>Toward a comprehensive characterization of a human cancer cell phosphoproteome.</title>
        <authorList>
            <person name="Zhou H."/>
            <person name="Di Palma S."/>
            <person name="Preisinger C."/>
            <person name="Peng M."/>
            <person name="Polat A.N."/>
            <person name="Heck A.J."/>
            <person name="Mohammed S."/>
        </authorList>
    </citation>
    <scope>PHOSPHORYLATION [LARGE SCALE ANALYSIS] AT SER-193</scope>
    <scope>IDENTIFICATION BY MASS SPECTROMETRY [LARGE SCALE ANALYSIS]</scope>
    <source>
        <tissue>Cervix carcinoma</tissue>
        <tissue>Erythroleukemia</tissue>
    </source>
</reference>
<reference key="7">
    <citation type="journal article" date="2014" name="J. Proteomics">
        <title>An enzyme assisted RP-RPLC approach for in-depth analysis of human liver phosphoproteome.</title>
        <authorList>
            <person name="Bian Y."/>
            <person name="Song C."/>
            <person name="Cheng K."/>
            <person name="Dong M."/>
            <person name="Wang F."/>
            <person name="Huang J."/>
            <person name="Sun D."/>
            <person name="Wang L."/>
            <person name="Ye M."/>
            <person name="Zou H."/>
        </authorList>
    </citation>
    <scope>IDENTIFICATION BY MASS SPECTROMETRY [LARGE SCALE ANALYSIS]</scope>
    <source>
        <tissue>Liver</tissue>
    </source>
</reference>
<reference key="8">
    <citation type="journal article" date="2016" name="PLoS ONE">
        <title>SDCCAG8 interacts with RAB effector proteins RABEP2 and ERC1 and is required for Hedgehog Signaling.</title>
        <authorList>
            <person name="Airik R."/>
            <person name="Schueler M."/>
            <person name="Airik M."/>
            <person name="Cho J."/>
            <person name="Ulanowicz K.A."/>
            <person name="Porath J.D."/>
            <person name="Hurd T.W."/>
            <person name="Bekker-Jensen S."/>
            <person name="Schroeder J.M."/>
            <person name="Andersen J.S."/>
            <person name="Hildebrandt F."/>
        </authorList>
    </citation>
    <scope>FUNCTION</scope>
    <scope>SUBCELLULAR LOCATION</scope>
    <scope>INTERACTION WITH SDCCAG8</scope>
</reference>
<reference key="9">
    <citation type="journal article" date="2017" name="Sci. Rep.">
        <title>Rab-GTPase binding effector protein 2 (RABEP2) is a primed substrate for Glycogen Synthase kinase-3 (GSK3).</title>
        <authorList>
            <person name="Logie L."/>
            <person name="Van Aalten L."/>
            <person name="Knebel A."/>
            <person name="Force T."/>
            <person name="Hastie C.J."/>
            <person name="MacLauchlan H."/>
            <person name="Campbell D.G."/>
            <person name="Gourlay R."/>
            <person name="Prescott A."/>
            <person name="Davidson J."/>
            <person name="Fuller W."/>
            <person name="Sutherland C."/>
        </authorList>
    </citation>
    <scope>PHOSPHORYLATION AT SER-200 AND SER-204</scope>
    <scope>SUBCELLULAR LOCATION</scope>
</reference>
<reference key="10">
    <citation type="journal article" date="2018" name="J. Biol. Chem.">
        <title>The Rab-effector protein RABEP2 regulates endosomal trafficking to mediate vascular endothelial growth factor receptor-2 (VEGFR2)-dependent signaling.</title>
        <authorList>
            <person name="Kofler N."/>
            <person name="Corti F."/>
            <person name="Rivera-Molina F."/>
            <person name="Deng Y."/>
            <person name="Toomre D."/>
            <person name="Simons M."/>
        </authorList>
    </citation>
    <scope>FUNCTION</scope>
    <scope>INTERACTION WITH RAB4A</scope>
</reference>
<protein>
    <recommendedName>
        <fullName>Rab GTPase-binding effector protein 2</fullName>
    </recommendedName>
    <alternativeName>
        <fullName>Rabaptin-5beta</fullName>
    </alternativeName>
</protein>
<keyword id="KW-0007">Acetylation</keyword>
<keyword id="KW-0025">Alternative splicing</keyword>
<keyword id="KW-0966">Cell projection</keyword>
<keyword id="KW-0970">Cilium biogenesis/degradation</keyword>
<keyword id="KW-0175">Coiled coil</keyword>
<keyword id="KW-0963">Cytoplasm</keyword>
<keyword id="KW-0206">Cytoskeleton</keyword>
<keyword id="KW-0254">Endocytosis</keyword>
<keyword id="KW-0967">Endosome</keyword>
<keyword id="KW-0597">Phosphoprotein</keyword>
<keyword id="KW-0653">Protein transport</keyword>
<keyword id="KW-1267">Proteomics identification</keyword>
<keyword id="KW-1185">Reference proteome</keyword>
<keyword id="KW-0813">Transport</keyword>
<feature type="initiator methionine" description="Removed" evidence="10">
    <location>
        <position position="1"/>
    </location>
</feature>
<feature type="chain" id="PRO_0000187559" description="Rab GTPase-binding effector protein 2">
    <location>
        <begin position="2"/>
        <end position="569"/>
    </location>
</feature>
<feature type="region of interest" description="Disordered" evidence="3">
    <location>
        <begin position="1"/>
        <end position="41"/>
    </location>
</feature>
<feature type="region of interest" description="Disordered" evidence="3">
    <location>
        <begin position="180"/>
        <end position="265"/>
    </location>
</feature>
<feature type="region of interest" description="Disordered" evidence="3">
    <location>
        <begin position="388"/>
        <end position="411"/>
    </location>
</feature>
<feature type="coiled-coil region" evidence="2">
    <location>
        <begin position="34"/>
        <end position="187"/>
    </location>
</feature>
<feature type="coiled-coil region" evidence="2">
    <location>
        <begin position="289"/>
        <end position="523"/>
    </location>
</feature>
<feature type="compositionally biased region" description="Low complexity" evidence="3">
    <location>
        <begin position="245"/>
        <end position="257"/>
    </location>
</feature>
<feature type="compositionally biased region" description="Low complexity" evidence="3">
    <location>
        <begin position="393"/>
        <end position="403"/>
    </location>
</feature>
<feature type="modified residue" description="N-acetylalanine" evidence="10">
    <location>
        <position position="2"/>
    </location>
</feature>
<feature type="modified residue" description="Phosphoserine" evidence="1">
    <location>
        <position position="189"/>
    </location>
</feature>
<feature type="modified residue" description="Phosphoserine" evidence="11">
    <location>
        <position position="193"/>
    </location>
</feature>
<feature type="modified residue" description="Phosphoserine; by GSK3-alpha" evidence="5">
    <location>
        <position position="200"/>
    </location>
</feature>
<feature type="modified residue" description="Phosphoserine" evidence="5">
    <location>
        <position position="204"/>
    </location>
</feature>
<feature type="splice variant" id="VSP_010458" description="In isoform 2." evidence="8">
    <location>
        <begin position="299"/>
        <end position="330"/>
    </location>
</feature>
<feature type="splice variant" id="VSP_010459" description="In isoform 2." evidence="8">
    <location>
        <begin position="475"/>
        <end position="478"/>
    </location>
</feature>
<evidence type="ECO:0000250" key="1">
    <source>
        <dbReference type="UniProtKB" id="Q62835"/>
    </source>
</evidence>
<evidence type="ECO:0000255" key="2"/>
<evidence type="ECO:0000256" key="3">
    <source>
        <dbReference type="SAM" id="MobiDB-lite"/>
    </source>
</evidence>
<evidence type="ECO:0000269" key="4">
    <source>
    </source>
</evidence>
<evidence type="ECO:0000269" key="5">
    <source>
    </source>
</evidence>
<evidence type="ECO:0000269" key="6">
    <source>
    </source>
</evidence>
<evidence type="ECO:0000269" key="7">
    <source>
    </source>
</evidence>
<evidence type="ECO:0000303" key="8">
    <source>
    </source>
</evidence>
<evidence type="ECO:0000305" key="9"/>
<evidence type="ECO:0007744" key="10">
    <source>
    </source>
</evidence>
<evidence type="ECO:0007744" key="11">
    <source>
    </source>
</evidence>
<gene>
    <name type="primary">RABEP2</name>
    <name type="synonym">RABPT5B</name>
</gene>
<organism>
    <name type="scientific">Homo sapiens</name>
    <name type="common">Human</name>
    <dbReference type="NCBI Taxonomy" id="9606"/>
    <lineage>
        <taxon>Eukaryota</taxon>
        <taxon>Metazoa</taxon>
        <taxon>Chordata</taxon>
        <taxon>Craniata</taxon>
        <taxon>Vertebrata</taxon>
        <taxon>Euteleostomi</taxon>
        <taxon>Mammalia</taxon>
        <taxon>Eutheria</taxon>
        <taxon>Euarchontoglires</taxon>
        <taxon>Primates</taxon>
        <taxon>Haplorrhini</taxon>
        <taxon>Catarrhini</taxon>
        <taxon>Hominidae</taxon>
        <taxon>Homo</taxon>
    </lineage>
</organism>
<comment type="function">
    <text evidence="4 6 7">Plays a role in membrane trafficking and in homotypic early endosome fusion (PubMed:9524116). Participates in arteriogenesis by regulating vascular endothelial growth factor receptor 2/VEGFR2 cell surface expression and endosomal trafficking (PubMed:29425100). By interacting with SDCCAG8, localizes to centrosomes and plays a critical role in ciliogenesis (PubMed:27224062).</text>
</comment>
<comment type="subunit">
    <text evidence="4 6">Heterodimer with RABGEF1. The dimer binds RAB5A that has been activated by GTP-binding. Interacts with SDCCAG8; this interaction is important for ciliogenesis regulation (PubMed:27224062). Interacts with RAB4A; this interaction may mediate VEGFR2 cell surface expression (PubMed:29425100).</text>
</comment>
<comment type="interaction">
    <interactant intactId="EBI-3940735">
        <id>Q9H5N1</id>
    </interactant>
    <interactant intactId="EBI-1047850">
        <id>Q86SQ7</id>
        <label>SDCCAG8</label>
    </interactant>
    <organismsDiffer>false</organismsDiffer>
    <experiments>5</experiments>
</comment>
<comment type="subcellular location">
    <subcellularLocation>
        <location evidence="5 7">Cytoplasm</location>
    </subcellularLocation>
    <subcellularLocation>
        <location evidence="7">Early endosome</location>
    </subcellularLocation>
    <subcellularLocation>
        <location evidence="4">Cytoplasm</location>
        <location evidence="4">Cytoskeleton</location>
        <location evidence="4">Microtubule organizing center</location>
        <location evidence="4">Centrosome</location>
    </subcellularLocation>
    <subcellularLocation>
        <location evidence="4">Cytoplasm</location>
        <location evidence="4">Cytoskeleton</location>
        <location evidence="4">Cilium basal body</location>
    </subcellularLocation>
</comment>
<comment type="alternative products">
    <event type="alternative splicing"/>
    <isoform>
        <id>Q9H5N1-1</id>
        <name>1</name>
        <sequence type="displayed"/>
    </isoform>
    <isoform>
        <id>Q9H5N1-2</id>
        <name>2</name>
        <sequence type="described" ref="VSP_010458 VSP_010459"/>
    </isoform>
</comment>
<comment type="similarity">
    <text evidence="9">Belongs to the rabaptin family.</text>
</comment>
<comment type="sequence caution" evidence="9">
    <conflict type="frameshift">
        <sequence resource="EMBL-CDS" id="BAB15594"/>
    </conflict>
</comment>
<accession>Q9H5N1</accession>